<comment type="function">
    <text evidence="1">Sulfotransferase that utilizes 3'-phospho-5'-adenylyl sulfate (PAPS) as sulfonate donor to catalyze the sulfonation of the hydroxyl group of hydroxysteroids and bile acids.</text>
</comment>
<comment type="catalytic activity">
    <reaction evidence="1">
        <text>an alcohol + 3'-phosphoadenylyl sulfate = an alkyl sulfate + adenosine 3',5'-bisphosphate + H(+)</text>
        <dbReference type="Rhea" id="RHEA:22552"/>
        <dbReference type="ChEBI" id="CHEBI:15378"/>
        <dbReference type="ChEBI" id="CHEBI:30879"/>
        <dbReference type="ChEBI" id="CHEBI:58339"/>
        <dbReference type="ChEBI" id="CHEBI:58343"/>
        <dbReference type="ChEBI" id="CHEBI:83414"/>
        <dbReference type="EC" id="2.8.2.2"/>
    </reaction>
    <physiologicalReaction direction="left-to-right" evidence="1">
        <dbReference type="Rhea" id="RHEA:22553"/>
    </physiologicalReaction>
</comment>
<comment type="catalytic activity">
    <reaction evidence="1">
        <text>glycolithocholate + 3'-phosphoadenylyl sulfate = sulfoglycolithocholate + adenosine 3',5'-bisphosphate + H(+)</text>
        <dbReference type="Rhea" id="RHEA:10908"/>
        <dbReference type="ChEBI" id="CHEBI:15378"/>
        <dbReference type="ChEBI" id="CHEBI:58339"/>
        <dbReference type="ChEBI" id="CHEBI:58343"/>
        <dbReference type="ChEBI" id="CHEBI:60007"/>
        <dbReference type="ChEBI" id="CHEBI:60008"/>
        <dbReference type="EC" id="2.8.2.14"/>
    </reaction>
    <physiologicalReaction direction="left-to-right" evidence="1">
        <dbReference type="Rhea" id="RHEA:10909"/>
    </physiologicalReaction>
</comment>
<comment type="catalytic activity">
    <reaction evidence="1">
        <text>taurolithocholate + 3'-phosphoadenylyl sulfate = taurolithocholate 3-sulfate + adenosine 3',5'-bisphosphate + H(+)</text>
        <dbReference type="Rhea" id="RHEA:14013"/>
        <dbReference type="ChEBI" id="CHEBI:15378"/>
        <dbReference type="ChEBI" id="CHEBI:17179"/>
        <dbReference type="ChEBI" id="CHEBI:58301"/>
        <dbReference type="ChEBI" id="CHEBI:58339"/>
        <dbReference type="ChEBI" id="CHEBI:58343"/>
        <dbReference type="EC" id="2.8.2.14"/>
    </reaction>
    <physiologicalReaction direction="left-to-right" evidence="1">
        <dbReference type="Rhea" id="RHEA:14014"/>
    </physiologicalReaction>
</comment>
<comment type="catalytic activity">
    <reaction evidence="1">
        <text>3beta-hydroxyandrost-5-en-17-one + 3'-phosphoadenylyl sulfate = dehydroepiandrosterone 3-sulfate + adenosine 3',5'-bisphosphate + H(+)</text>
        <dbReference type="Rhea" id="RHEA:51216"/>
        <dbReference type="ChEBI" id="CHEBI:15378"/>
        <dbReference type="ChEBI" id="CHEBI:28689"/>
        <dbReference type="ChEBI" id="CHEBI:57905"/>
        <dbReference type="ChEBI" id="CHEBI:58339"/>
        <dbReference type="ChEBI" id="CHEBI:58343"/>
    </reaction>
    <physiologicalReaction direction="left-to-right" evidence="1">
        <dbReference type="Rhea" id="RHEA:51217"/>
    </physiologicalReaction>
</comment>
<comment type="subunit">
    <text evidence="1">Oligomer.</text>
</comment>
<comment type="subcellular location">
    <subcellularLocation>
        <location evidence="1">Cytoplasm</location>
        <location evidence="1">Cytosol</location>
    </subcellularLocation>
</comment>
<comment type="similarity">
    <text evidence="3">Belongs to the sulfotransferase 1 family.</text>
</comment>
<organism evidence="4">
    <name type="scientific">Mus musculus</name>
    <name type="common">Mouse</name>
    <dbReference type="NCBI Taxonomy" id="10090"/>
    <lineage>
        <taxon>Eukaryota</taxon>
        <taxon>Metazoa</taxon>
        <taxon>Chordata</taxon>
        <taxon>Craniata</taxon>
        <taxon>Vertebrata</taxon>
        <taxon>Euteleostomi</taxon>
        <taxon>Mammalia</taxon>
        <taxon>Eutheria</taxon>
        <taxon>Euarchontoglires</taxon>
        <taxon>Glires</taxon>
        <taxon>Rodentia</taxon>
        <taxon>Myomorpha</taxon>
        <taxon>Muroidea</taxon>
        <taxon>Muridae</taxon>
        <taxon>Murinae</taxon>
        <taxon>Mus</taxon>
        <taxon>Mus</taxon>
    </lineage>
</organism>
<sequence>MMSDYSWFEGIPLPDMWVQKEIVEDVHNKFVVKDEDLIILTYPKSGTNWLIEIVCLIQTKGDPKWIQSVPNWERSPWLESKSGYSVLTSKEGPRLMTSHLPIHLFSKSFFSSKAKVIYLIRNPRDVLVSGYFFWANTNLVKNLESLGIYFEQFLKGNVRYGSWFEHIHGWLSMRERNNFLVLYYEDMKKDAKGTIKKICDFLGKNLGPDELDLVLKYSSFQAMKENNMSNYSLIKEDQITNGLKLMRKGTTGDWKNHFTVAQTEAFDKVFQDKMVGFPPGMFPWE</sequence>
<feature type="chain" id="PRO_0000459224" description="Sulfotransferase 2A6">
    <location>
        <begin position="1"/>
        <end position="285"/>
    </location>
</feature>
<feature type="active site" description="Proton acceptor" evidence="2">
    <location>
        <position position="99"/>
    </location>
</feature>
<feature type="binding site" evidence="2">
    <location>
        <begin position="44"/>
        <end position="49"/>
    </location>
    <ligand>
        <name>3'-phosphoadenylyl sulfate</name>
        <dbReference type="ChEBI" id="CHEBI:58339"/>
    </ligand>
</feature>
<feature type="binding site" evidence="2">
    <location>
        <position position="121"/>
    </location>
    <ligand>
        <name>3'-phosphoadenylyl sulfate</name>
        <dbReference type="ChEBI" id="CHEBI:58339"/>
    </ligand>
</feature>
<feature type="binding site" evidence="2">
    <location>
        <position position="129"/>
    </location>
    <ligand>
        <name>3'-phosphoadenylyl sulfate</name>
        <dbReference type="ChEBI" id="CHEBI:58339"/>
    </ligand>
</feature>
<feature type="binding site" evidence="2">
    <location>
        <position position="184"/>
    </location>
    <ligand>
        <name>3'-phosphoadenylyl sulfate</name>
        <dbReference type="ChEBI" id="CHEBI:58339"/>
    </ligand>
</feature>
<feature type="binding site" evidence="2">
    <location>
        <begin position="218"/>
        <end position="223"/>
    </location>
    <ligand>
        <name>3'-phosphoadenylyl sulfate</name>
        <dbReference type="ChEBI" id="CHEBI:58339"/>
    </ligand>
</feature>
<feature type="binding site" evidence="2">
    <location>
        <begin position="247"/>
        <end position="249"/>
    </location>
    <ligand>
        <name>3'-phosphoadenylyl sulfate</name>
        <dbReference type="ChEBI" id="CHEBI:58339"/>
    </ligand>
</feature>
<proteinExistence type="evidence at transcript level"/>
<accession>B2RVI8</accession>
<gene>
    <name evidence="5" type="primary">Sult2a6</name>
    <name evidence="4" type="synonym">Gm6957</name>
</gene>
<evidence type="ECO:0000250" key="1">
    <source>
        <dbReference type="UniProtKB" id="P22789"/>
    </source>
</evidence>
<evidence type="ECO:0000250" key="2">
    <source>
        <dbReference type="UniProtKB" id="Q06520"/>
    </source>
</evidence>
<evidence type="ECO:0000305" key="3"/>
<evidence type="ECO:0000312" key="4">
    <source>
        <dbReference type="EMBL" id="AAI47211.1"/>
    </source>
</evidence>
<evidence type="ECO:0000312" key="5">
    <source>
        <dbReference type="MGI" id="MGI:3648915"/>
    </source>
</evidence>
<protein>
    <recommendedName>
        <fullName evidence="1">Sulfotransferase 2A6</fullName>
        <shortName evidence="1">ST2A6</shortName>
        <ecNumber evidence="1">2.8.2.2</ecNumber>
    </recommendedName>
    <alternativeName>
        <fullName>Bile acid:3'phosphoadenosine-5'phosphosulfate:sulfotransferase I</fullName>
        <shortName evidence="1">BAST I</shortName>
        <ecNumber evidence="1">2.8.2.14</ecNumber>
    </alternativeName>
</protein>
<keyword id="KW-0963">Cytoplasm</keyword>
<keyword id="KW-0443">Lipid metabolism</keyword>
<keyword id="KW-1185">Reference proteome</keyword>
<keyword id="KW-0753">Steroid metabolism</keyword>
<keyword id="KW-0808">Transferase</keyword>
<name>ST2A6_MOUSE</name>
<reference key="1">
    <citation type="journal article" date="2009" name="PLoS Biol.">
        <title>Lineage-specific biology revealed by a finished genome assembly of the mouse.</title>
        <authorList>
            <person name="Church D.M."/>
            <person name="Goodstadt L."/>
            <person name="Hillier L.W."/>
            <person name="Zody M.C."/>
            <person name="Goldstein S."/>
            <person name="She X."/>
            <person name="Bult C.J."/>
            <person name="Agarwala R."/>
            <person name="Cherry J.L."/>
            <person name="DiCuccio M."/>
            <person name="Hlavina W."/>
            <person name="Kapustin Y."/>
            <person name="Meric P."/>
            <person name="Maglott D."/>
            <person name="Birtle Z."/>
            <person name="Marques A.C."/>
            <person name="Graves T."/>
            <person name="Zhou S."/>
            <person name="Teague B."/>
            <person name="Potamousis K."/>
            <person name="Churas C."/>
            <person name="Place M."/>
            <person name="Herschleb J."/>
            <person name="Runnheim R."/>
            <person name="Forrest D."/>
            <person name="Amos-Landgraf J."/>
            <person name="Schwartz D.C."/>
            <person name="Cheng Z."/>
            <person name="Lindblad-Toh K."/>
            <person name="Eichler E.E."/>
            <person name="Ponting C.P."/>
        </authorList>
    </citation>
    <scope>NUCLEOTIDE SEQUENCE [LARGE SCALE GENOMIC DNA]</scope>
    <source>
        <strain>C57BL/6J</strain>
    </source>
</reference>
<reference key="2">
    <citation type="journal article" date="2004" name="Genome Res.">
        <title>The status, quality, and expansion of the NIH full-length cDNA project: the Mammalian Gene Collection (MGC).</title>
        <authorList>
            <consortium name="The MGC Project Team"/>
        </authorList>
    </citation>
    <scope>NUCLEOTIDE SEQUENCE [LARGE SCALE MRNA]</scope>
    <source>
        <tissue>Brain</tissue>
    </source>
</reference>
<dbReference type="EC" id="2.8.2.2" evidence="1"/>
<dbReference type="EC" id="2.8.2.14" evidence="1"/>
<dbReference type="EMBL" id="AC098714">
    <property type="status" value="NOT_ANNOTATED_CDS"/>
    <property type="molecule type" value="Genomic_DNA"/>
</dbReference>
<dbReference type="EMBL" id="BC147210">
    <property type="protein sequence ID" value="AAI47211.1"/>
    <property type="molecule type" value="mRNA"/>
</dbReference>
<dbReference type="CCDS" id="CCDS39773.1"/>
<dbReference type="RefSeq" id="NP_001074794.1">
    <property type="nucleotide sequence ID" value="NM_001081325.2"/>
</dbReference>
<dbReference type="SMR" id="B2RVI8"/>
<dbReference type="FunCoup" id="B2RVI8">
    <property type="interactions" value="265"/>
</dbReference>
<dbReference type="STRING" id="10090.ENSMUSP00000075884"/>
<dbReference type="iPTMnet" id="B2RVI8"/>
<dbReference type="PhosphoSitePlus" id="B2RVI8"/>
<dbReference type="PaxDb" id="10090-ENSMUSP00000075884"/>
<dbReference type="Ensembl" id="ENSMUST00000076576.7">
    <property type="protein sequence ID" value="ENSMUSP00000075884.6"/>
    <property type="gene ID" value="ENSMUSG00000070810.11"/>
</dbReference>
<dbReference type="GeneID" id="629219"/>
<dbReference type="KEGG" id="mmu:629219"/>
<dbReference type="UCSC" id="uc009fga.2">
    <property type="organism name" value="mouse"/>
</dbReference>
<dbReference type="AGR" id="MGI:3648915"/>
<dbReference type="CTD" id="629219"/>
<dbReference type="MGI" id="MGI:3648915">
    <property type="gene designation" value="Sult2a6"/>
</dbReference>
<dbReference type="VEuPathDB" id="HostDB:ENSMUSG00000070810"/>
<dbReference type="eggNOG" id="KOG1584">
    <property type="taxonomic scope" value="Eukaryota"/>
</dbReference>
<dbReference type="GeneTree" id="ENSGT00940000154432"/>
<dbReference type="HOGENOM" id="CLU_027239_1_0_1"/>
<dbReference type="OMA" id="WISELIH"/>
<dbReference type="OrthoDB" id="205623at2759"/>
<dbReference type="TreeFam" id="TF321745"/>
<dbReference type="BioGRID-ORCS" id="629219">
    <property type="hits" value="2 hits in 76 CRISPR screens"/>
</dbReference>
<dbReference type="PRO" id="PR:B2RVI8"/>
<dbReference type="Proteomes" id="UP000000589">
    <property type="component" value="Chromosome 7"/>
</dbReference>
<dbReference type="RNAct" id="B2RVI8">
    <property type="molecule type" value="protein"/>
</dbReference>
<dbReference type="Bgee" id="ENSMUSG00000070810">
    <property type="expression patterns" value="Expressed in blastoderm cell in morula and 1 other cell type or tissue"/>
</dbReference>
<dbReference type="ExpressionAtlas" id="B2RVI8">
    <property type="expression patterns" value="baseline and differential"/>
</dbReference>
<dbReference type="GO" id="GO:0005829">
    <property type="term" value="C:cytosol"/>
    <property type="evidence" value="ECO:0007669"/>
    <property type="project" value="UniProtKB-SubCell"/>
</dbReference>
<dbReference type="GO" id="GO:0008146">
    <property type="term" value="F:sulfotransferase activity"/>
    <property type="evidence" value="ECO:0007669"/>
    <property type="project" value="InterPro"/>
</dbReference>
<dbReference type="GO" id="GO:0008202">
    <property type="term" value="P:steroid metabolic process"/>
    <property type="evidence" value="ECO:0007669"/>
    <property type="project" value="UniProtKB-KW"/>
</dbReference>
<dbReference type="FunFam" id="3.40.50.300:FF:000433">
    <property type="entry name" value="Estrogen sulfotransferase"/>
    <property type="match status" value="1"/>
</dbReference>
<dbReference type="Gene3D" id="3.40.50.300">
    <property type="entry name" value="P-loop containing nucleotide triphosphate hydrolases"/>
    <property type="match status" value="1"/>
</dbReference>
<dbReference type="InterPro" id="IPR027417">
    <property type="entry name" value="P-loop_NTPase"/>
</dbReference>
<dbReference type="InterPro" id="IPR000863">
    <property type="entry name" value="Sulfotransferase_dom"/>
</dbReference>
<dbReference type="PANTHER" id="PTHR11783">
    <property type="entry name" value="SULFOTRANSFERASE SULT"/>
    <property type="match status" value="1"/>
</dbReference>
<dbReference type="Pfam" id="PF00685">
    <property type="entry name" value="Sulfotransfer_1"/>
    <property type="match status" value="1"/>
</dbReference>
<dbReference type="SUPFAM" id="SSF52540">
    <property type="entry name" value="P-loop containing nucleoside triphosphate hydrolases"/>
    <property type="match status" value="1"/>
</dbReference>